<dbReference type="EC" id="1.2.1.41" evidence="1"/>
<dbReference type="EMBL" id="CP001138">
    <property type="protein sequence ID" value="ACH50539.1"/>
    <property type="molecule type" value="Genomic_DNA"/>
</dbReference>
<dbReference type="RefSeq" id="WP_000893240.1">
    <property type="nucleotide sequence ID" value="NC_011149.1"/>
</dbReference>
<dbReference type="SMR" id="B5EWK6"/>
<dbReference type="KEGG" id="sea:SeAg_B0357"/>
<dbReference type="HOGENOM" id="CLU_030231_0_0_6"/>
<dbReference type="UniPathway" id="UPA00098">
    <property type="reaction ID" value="UER00360"/>
</dbReference>
<dbReference type="Proteomes" id="UP000008819">
    <property type="component" value="Chromosome"/>
</dbReference>
<dbReference type="GO" id="GO:0005737">
    <property type="term" value="C:cytoplasm"/>
    <property type="evidence" value="ECO:0007669"/>
    <property type="project" value="UniProtKB-SubCell"/>
</dbReference>
<dbReference type="GO" id="GO:0004350">
    <property type="term" value="F:glutamate-5-semialdehyde dehydrogenase activity"/>
    <property type="evidence" value="ECO:0007669"/>
    <property type="project" value="UniProtKB-UniRule"/>
</dbReference>
<dbReference type="GO" id="GO:0050661">
    <property type="term" value="F:NADP binding"/>
    <property type="evidence" value="ECO:0007669"/>
    <property type="project" value="InterPro"/>
</dbReference>
<dbReference type="GO" id="GO:0055129">
    <property type="term" value="P:L-proline biosynthetic process"/>
    <property type="evidence" value="ECO:0007669"/>
    <property type="project" value="UniProtKB-UniRule"/>
</dbReference>
<dbReference type="CDD" id="cd07079">
    <property type="entry name" value="ALDH_F18-19_ProA-GPR"/>
    <property type="match status" value="1"/>
</dbReference>
<dbReference type="FunFam" id="3.40.309.10:FF:000006">
    <property type="entry name" value="Gamma-glutamyl phosphate reductase"/>
    <property type="match status" value="1"/>
</dbReference>
<dbReference type="Gene3D" id="3.40.605.10">
    <property type="entry name" value="Aldehyde Dehydrogenase, Chain A, domain 1"/>
    <property type="match status" value="1"/>
</dbReference>
<dbReference type="Gene3D" id="3.40.309.10">
    <property type="entry name" value="Aldehyde Dehydrogenase, Chain A, domain 2"/>
    <property type="match status" value="1"/>
</dbReference>
<dbReference type="HAMAP" id="MF_00412">
    <property type="entry name" value="ProA"/>
    <property type="match status" value="1"/>
</dbReference>
<dbReference type="InterPro" id="IPR016161">
    <property type="entry name" value="Ald_DH/histidinol_DH"/>
</dbReference>
<dbReference type="InterPro" id="IPR016163">
    <property type="entry name" value="Ald_DH_C"/>
</dbReference>
<dbReference type="InterPro" id="IPR016162">
    <property type="entry name" value="Ald_DH_N"/>
</dbReference>
<dbReference type="InterPro" id="IPR015590">
    <property type="entry name" value="Aldehyde_DH_dom"/>
</dbReference>
<dbReference type="InterPro" id="IPR020593">
    <property type="entry name" value="G-glutamylP_reductase_CS"/>
</dbReference>
<dbReference type="InterPro" id="IPR012134">
    <property type="entry name" value="Glu-5-SA_DH"/>
</dbReference>
<dbReference type="InterPro" id="IPR000965">
    <property type="entry name" value="GPR_dom"/>
</dbReference>
<dbReference type="NCBIfam" id="NF001221">
    <property type="entry name" value="PRK00197.1"/>
    <property type="match status" value="1"/>
</dbReference>
<dbReference type="NCBIfam" id="TIGR00407">
    <property type="entry name" value="proA"/>
    <property type="match status" value="1"/>
</dbReference>
<dbReference type="PANTHER" id="PTHR11063:SF8">
    <property type="entry name" value="DELTA-1-PYRROLINE-5-CARBOXYLATE SYNTHASE"/>
    <property type="match status" value="1"/>
</dbReference>
<dbReference type="PANTHER" id="PTHR11063">
    <property type="entry name" value="GLUTAMATE SEMIALDEHYDE DEHYDROGENASE"/>
    <property type="match status" value="1"/>
</dbReference>
<dbReference type="Pfam" id="PF00171">
    <property type="entry name" value="Aldedh"/>
    <property type="match status" value="1"/>
</dbReference>
<dbReference type="PIRSF" id="PIRSF000151">
    <property type="entry name" value="GPR"/>
    <property type="match status" value="1"/>
</dbReference>
<dbReference type="SUPFAM" id="SSF53720">
    <property type="entry name" value="ALDH-like"/>
    <property type="match status" value="1"/>
</dbReference>
<dbReference type="PROSITE" id="PS01223">
    <property type="entry name" value="PROA"/>
    <property type="match status" value="1"/>
</dbReference>
<name>PROA_SALA4</name>
<sequence length="416" mass="44699">MLEQMGIAAKAASYKLALLSSGEKNRVLEKIADELEAQMESILSANVQDVEQARDNGLSEAMLDRLTLTPARLKAIADDVRQVCNLADPVGQVIDGGLLDSGLRLERRRVPLGVVGVIYEARPNVTVDVASLCLKTGNAVILRGGKETHRTNAATVRVIQKALKACGLPEAAVQAIDNPDRSLVNEMLRMDKYIDMLIPRGGAGLHKLCREQSTIPVITGGIGVCHIFVDSSADIAPALKIIVNAKTQRPSTCNTVETLLVHQDIAERFLPALSKQMAESGVTLHGDETVMQVLHGPAKLVPLKPEELDNEFLSLDLNVVVVENMDGAIGHIREHGTQHSDAILTCDMHNAARFVNEVDSAAVYVNASTRFTDGGQFGLGAEVAVSTQKLHARGPMGLEALTTYKWIGFGDGTIRA</sequence>
<keyword id="KW-0028">Amino-acid biosynthesis</keyword>
<keyword id="KW-0963">Cytoplasm</keyword>
<keyword id="KW-0521">NADP</keyword>
<keyword id="KW-0560">Oxidoreductase</keyword>
<keyword id="KW-0641">Proline biosynthesis</keyword>
<accession>B5EWK6</accession>
<gene>
    <name evidence="1" type="primary">proA</name>
    <name type="ordered locus">SeAg_B0357</name>
</gene>
<feature type="chain" id="PRO_1000193644" description="Gamma-glutamyl phosphate reductase">
    <location>
        <begin position="1"/>
        <end position="416"/>
    </location>
</feature>
<organism>
    <name type="scientific">Salmonella agona (strain SL483)</name>
    <dbReference type="NCBI Taxonomy" id="454166"/>
    <lineage>
        <taxon>Bacteria</taxon>
        <taxon>Pseudomonadati</taxon>
        <taxon>Pseudomonadota</taxon>
        <taxon>Gammaproteobacteria</taxon>
        <taxon>Enterobacterales</taxon>
        <taxon>Enterobacteriaceae</taxon>
        <taxon>Salmonella</taxon>
    </lineage>
</organism>
<reference key="1">
    <citation type="journal article" date="2011" name="J. Bacteriol.">
        <title>Comparative genomics of 28 Salmonella enterica isolates: evidence for CRISPR-mediated adaptive sublineage evolution.</title>
        <authorList>
            <person name="Fricke W.F."/>
            <person name="Mammel M.K."/>
            <person name="McDermott P.F."/>
            <person name="Tartera C."/>
            <person name="White D.G."/>
            <person name="Leclerc J.E."/>
            <person name="Ravel J."/>
            <person name="Cebula T.A."/>
        </authorList>
    </citation>
    <scope>NUCLEOTIDE SEQUENCE [LARGE SCALE GENOMIC DNA]</scope>
    <source>
        <strain>SL483</strain>
    </source>
</reference>
<evidence type="ECO:0000255" key="1">
    <source>
        <dbReference type="HAMAP-Rule" id="MF_00412"/>
    </source>
</evidence>
<protein>
    <recommendedName>
        <fullName evidence="1">Gamma-glutamyl phosphate reductase</fullName>
        <shortName evidence="1">GPR</shortName>
        <ecNumber evidence="1">1.2.1.41</ecNumber>
    </recommendedName>
    <alternativeName>
        <fullName evidence="1">Glutamate-5-semialdehyde dehydrogenase</fullName>
    </alternativeName>
    <alternativeName>
        <fullName evidence="1">Glutamyl-gamma-semialdehyde dehydrogenase</fullName>
        <shortName evidence="1">GSA dehydrogenase</shortName>
    </alternativeName>
</protein>
<comment type="function">
    <text evidence="1">Catalyzes the NADPH-dependent reduction of L-glutamate 5-phosphate into L-glutamate 5-semialdehyde and phosphate. The product spontaneously undergoes cyclization to form 1-pyrroline-5-carboxylate.</text>
</comment>
<comment type="catalytic activity">
    <reaction evidence="1">
        <text>L-glutamate 5-semialdehyde + phosphate + NADP(+) = L-glutamyl 5-phosphate + NADPH + H(+)</text>
        <dbReference type="Rhea" id="RHEA:19541"/>
        <dbReference type="ChEBI" id="CHEBI:15378"/>
        <dbReference type="ChEBI" id="CHEBI:43474"/>
        <dbReference type="ChEBI" id="CHEBI:57783"/>
        <dbReference type="ChEBI" id="CHEBI:58066"/>
        <dbReference type="ChEBI" id="CHEBI:58274"/>
        <dbReference type="ChEBI" id="CHEBI:58349"/>
        <dbReference type="EC" id="1.2.1.41"/>
    </reaction>
</comment>
<comment type="pathway">
    <text evidence="1">Amino-acid biosynthesis; L-proline biosynthesis; L-glutamate 5-semialdehyde from L-glutamate: step 2/2.</text>
</comment>
<comment type="subcellular location">
    <subcellularLocation>
        <location evidence="1">Cytoplasm</location>
    </subcellularLocation>
</comment>
<comment type="similarity">
    <text evidence="1">Belongs to the gamma-glutamyl phosphate reductase family.</text>
</comment>
<proteinExistence type="inferred from homology"/>